<sequence>MSKLVPIEVTEDRRPTDIKQIQFRLASPEKVMSWSHGEVKKPETINYRTLKPERDGLFCAKIFGPVRDYECLCGKYKKMRYKGVVCEKCGVEVTSTKVRRIRMGHIELVTPVAHIWYVSSLPSRIGTLLGIKMKDLERVLYYEAYIVESGGEAYYDAEAKTPVLKYDVLNEEQYRTLVSRFGELGFKARMGGEVVRDLLDSIDLVDLFTQLKEDIELTKSEAKTKTIAKRLKVIESFLNSGNNPAWMMLTVLPVLPPDLRPLVSLDGGKFAVSDVNDLYRRVINRNQRLKRLVELEAPEIIVRNEKRMLQESVDALFDNGRRANAVKGANKRPLKSLSEIIKGKQGRFRQNLLGKRVDFSGRTVIVVGPSLSMDECGLPKKMALELFKPHLIAKLEDKGYATTVKAAKKMIEDKTNEVWECLAEIVDGYPVLLNRAPTLHKLSIQAFHPKLIDGKAIQLHPLVCAAFNADFDGDQMAVHIPLSSAAIAEAKVLMLASMNILLPASGKAIATPSQDMVLGIYYITLEKNGVKGSNKLFANVDEVRIAIEHDALDIHAKVRTRDDGRIIHTTAGRMLLKAILPNFVPSELWNRVMKKKAINEVVDYVQKHGGIGVTAGFLDRLKNLGFKHATEAGISISIDDIKIPAGKEAKIAESKNRVFEIQKQFEAGLLTEQERYNKIIDVWTDTNNTLATQMMDLVQTDKAGFNSIHMMADSGARGSAAQIRQLAGMRGLMAKPSGEIIETPIISNFKEGLNVVEYFISTHGARKGLADTALKTANAGYLTRKLVDVAQNVKIVEHDCHTHEGIEISDISDQNTLIESLEDRLNGRVLADDVIDPISNEILFAEGTLLDEVSAKVIAEAGIKTAYIRTPTTCKSENGICALCYGVNLATGQIVRRGEAVGIIAAQSIGEPGTQLTLRTFHVGGTASSTAQERQVVAEKEGFIRYYNLKTYVSKEGRNIVANRRNAAVLLVEPKIKAPFSGRVEIQTVHDEVIISVSSKTDTIRYVLRKNEIAKPNELAGVGGQIEGKYYFPYESGAEVQEYESIVETIKDGWNVPSRIPYASEVLVANGAPVTQKIFAKEDGVVKYFLLRGDYLERFEGLKAGYEVIEKGLFATVVDSNNREAVRHYIARGSIIVAEDDAVVDPKTLIAKPKNDESTVIAEWDPYSNPIISETSGTVKFEDIIIGTTATEQYDELTGKTRLMISDHVPAEYKPTIVLASEDGELLRYQVQSKTSIYVEDGAKVKVADIIAKTPKALQKSSDITGGLPRVSELFEGRRPKATALISEIDGVVSFGKSLRGKIRIIVASDNGILKEYFVDKSHTPVVNSGDFVHAGERLTSGIISSHELLRIMGVKTLYNYLVSEVQQVYRSQGVNISDKHIEVIFTQMLRQVKILKSGDTKFIEGDLISKVKFAQENEKIIKLGGRPAIAEPFLVGITRAAVSADSIISAASFQDTTKVLTEAAVSAKVDDLNDLKENVIIGRTIPVGTGIYKDQEIMFGYN</sequence>
<comment type="function">
    <text evidence="1">DNA-dependent RNA polymerase catalyzes the transcription of DNA into RNA using the four ribonucleoside triphosphates as substrates.</text>
</comment>
<comment type="catalytic activity">
    <reaction evidence="1">
        <text>RNA(n) + a ribonucleoside 5'-triphosphate = RNA(n+1) + diphosphate</text>
        <dbReference type="Rhea" id="RHEA:21248"/>
        <dbReference type="Rhea" id="RHEA-COMP:14527"/>
        <dbReference type="Rhea" id="RHEA-COMP:17342"/>
        <dbReference type="ChEBI" id="CHEBI:33019"/>
        <dbReference type="ChEBI" id="CHEBI:61557"/>
        <dbReference type="ChEBI" id="CHEBI:140395"/>
        <dbReference type="EC" id="2.7.7.6"/>
    </reaction>
</comment>
<comment type="cofactor">
    <cofactor evidence="1">
        <name>Mg(2+)</name>
        <dbReference type="ChEBI" id="CHEBI:18420"/>
    </cofactor>
    <text evidence="1">Binds 1 Mg(2+) ion per subunit.</text>
</comment>
<comment type="cofactor">
    <cofactor evidence="1">
        <name>Zn(2+)</name>
        <dbReference type="ChEBI" id="CHEBI:29105"/>
    </cofactor>
    <text evidence="1">Binds 2 Zn(2+) ions per subunit.</text>
</comment>
<comment type="subunit">
    <text evidence="1">The RNAP catalytic core consists of 2 alpha, 1 beta, 1 beta' and 1 omega subunit. When a sigma factor is associated with the core the holoenzyme is formed, which can initiate transcription.</text>
</comment>
<comment type="similarity">
    <text evidence="1">Belongs to the RNA polymerase beta' chain family.</text>
</comment>
<organism>
    <name type="scientific">Sulfurimonas denitrificans (strain ATCC 33889 / DSM 1251)</name>
    <name type="common">Thiomicrospira denitrificans (strain ATCC 33889 / DSM 1251)</name>
    <dbReference type="NCBI Taxonomy" id="326298"/>
    <lineage>
        <taxon>Bacteria</taxon>
        <taxon>Pseudomonadati</taxon>
        <taxon>Campylobacterota</taxon>
        <taxon>Epsilonproteobacteria</taxon>
        <taxon>Campylobacterales</taxon>
        <taxon>Sulfurimonadaceae</taxon>
        <taxon>Sulfurimonas</taxon>
    </lineage>
</organism>
<feature type="chain" id="PRO_0000240829" description="DNA-directed RNA polymerase subunit beta'">
    <location>
        <begin position="1"/>
        <end position="1503"/>
    </location>
</feature>
<feature type="binding site" evidence="1">
    <location>
        <position position="71"/>
    </location>
    <ligand>
        <name>Zn(2+)</name>
        <dbReference type="ChEBI" id="CHEBI:29105"/>
        <label>1</label>
    </ligand>
</feature>
<feature type="binding site" evidence="1">
    <location>
        <position position="73"/>
    </location>
    <ligand>
        <name>Zn(2+)</name>
        <dbReference type="ChEBI" id="CHEBI:29105"/>
        <label>1</label>
    </ligand>
</feature>
<feature type="binding site" evidence="1">
    <location>
        <position position="86"/>
    </location>
    <ligand>
        <name>Zn(2+)</name>
        <dbReference type="ChEBI" id="CHEBI:29105"/>
        <label>1</label>
    </ligand>
</feature>
<feature type="binding site" evidence="1">
    <location>
        <position position="89"/>
    </location>
    <ligand>
        <name>Zn(2+)</name>
        <dbReference type="ChEBI" id="CHEBI:29105"/>
        <label>1</label>
    </ligand>
</feature>
<feature type="binding site" evidence="1">
    <location>
        <position position="470"/>
    </location>
    <ligand>
        <name>Mg(2+)</name>
        <dbReference type="ChEBI" id="CHEBI:18420"/>
    </ligand>
</feature>
<feature type="binding site" evidence="1">
    <location>
        <position position="472"/>
    </location>
    <ligand>
        <name>Mg(2+)</name>
        <dbReference type="ChEBI" id="CHEBI:18420"/>
    </ligand>
</feature>
<feature type="binding site" evidence="1">
    <location>
        <position position="474"/>
    </location>
    <ligand>
        <name>Mg(2+)</name>
        <dbReference type="ChEBI" id="CHEBI:18420"/>
    </ligand>
</feature>
<feature type="binding site" evidence="1">
    <location>
        <position position="800"/>
    </location>
    <ligand>
        <name>Zn(2+)</name>
        <dbReference type="ChEBI" id="CHEBI:29105"/>
        <label>2</label>
    </ligand>
</feature>
<feature type="binding site" evidence="1">
    <location>
        <position position="874"/>
    </location>
    <ligand>
        <name>Zn(2+)</name>
        <dbReference type="ChEBI" id="CHEBI:29105"/>
        <label>2</label>
    </ligand>
</feature>
<feature type="binding site" evidence="1">
    <location>
        <position position="881"/>
    </location>
    <ligand>
        <name>Zn(2+)</name>
        <dbReference type="ChEBI" id="CHEBI:29105"/>
        <label>2</label>
    </ligand>
</feature>
<feature type="binding site" evidence="1">
    <location>
        <position position="884"/>
    </location>
    <ligand>
        <name>Zn(2+)</name>
        <dbReference type="ChEBI" id="CHEBI:29105"/>
        <label>2</label>
    </ligand>
</feature>
<gene>
    <name evidence="1" type="primary">rpoC</name>
    <name type="ordered locus">Suden_0354</name>
</gene>
<accession>Q30TP6</accession>
<reference key="1">
    <citation type="journal article" date="2008" name="Appl. Environ. Microbiol.">
        <title>Genome of the epsilonproteobacterial chemolithoautotroph Sulfurimonas denitrificans.</title>
        <authorList>
            <person name="Sievert S.M."/>
            <person name="Scott K.M."/>
            <person name="Klotz M.G."/>
            <person name="Chain P.S.G."/>
            <person name="Hauser L.J."/>
            <person name="Hemp J."/>
            <person name="Huegler M."/>
            <person name="Land M."/>
            <person name="Lapidus A."/>
            <person name="Larimer F.W."/>
            <person name="Lucas S."/>
            <person name="Malfatti S.A."/>
            <person name="Meyer F."/>
            <person name="Paulsen I.T."/>
            <person name="Ren Q."/>
            <person name="Simon J."/>
            <person name="Bailey K."/>
            <person name="Diaz E."/>
            <person name="Fitzpatrick K.A."/>
            <person name="Glover B."/>
            <person name="Gwatney N."/>
            <person name="Korajkic A."/>
            <person name="Long A."/>
            <person name="Mobberley J.M."/>
            <person name="Pantry S.N."/>
            <person name="Pazder G."/>
            <person name="Peterson S."/>
            <person name="Quintanilla J.D."/>
            <person name="Sprinkle R."/>
            <person name="Stephens J."/>
            <person name="Thomas P."/>
            <person name="Vaughn R."/>
            <person name="Weber M.J."/>
            <person name="Wooten L.L."/>
        </authorList>
    </citation>
    <scope>NUCLEOTIDE SEQUENCE [LARGE SCALE GENOMIC DNA]</scope>
    <source>
        <strain>ATCC 33889 / DSM 1251</strain>
    </source>
</reference>
<protein>
    <recommendedName>
        <fullName evidence="1">DNA-directed RNA polymerase subunit beta'</fullName>
        <shortName evidence="1">RNAP subunit beta'</shortName>
        <ecNumber evidence="1">2.7.7.6</ecNumber>
    </recommendedName>
    <alternativeName>
        <fullName evidence="1">RNA polymerase subunit beta'</fullName>
    </alternativeName>
    <alternativeName>
        <fullName evidence="1">Transcriptase subunit beta'</fullName>
    </alternativeName>
</protein>
<name>RPOC_SULDN</name>
<proteinExistence type="inferred from homology"/>
<evidence type="ECO:0000255" key="1">
    <source>
        <dbReference type="HAMAP-Rule" id="MF_01322"/>
    </source>
</evidence>
<dbReference type="EC" id="2.7.7.6" evidence="1"/>
<dbReference type="EMBL" id="CP000153">
    <property type="protein sequence ID" value="ABB43635.1"/>
    <property type="molecule type" value="Genomic_DNA"/>
</dbReference>
<dbReference type="RefSeq" id="WP_011371989.1">
    <property type="nucleotide sequence ID" value="NC_007575.1"/>
</dbReference>
<dbReference type="SMR" id="Q30TP6"/>
<dbReference type="STRING" id="326298.Suden_0354"/>
<dbReference type="KEGG" id="tdn:Suden_0354"/>
<dbReference type="eggNOG" id="COG0086">
    <property type="taxonomic scope" value="Bacteria"/>
</dbReference>
<dbReference type="HOGENOM" id="CLU_000524_3_1_7"/>
<dbReference type="OrthoDB" id="9815296at2"/>
<dbReference type="Proteomes" id="UP000002714">
    <property type="component" value="Chromosome"/>
</dbReference>
<dbReference type="GO" id="GO:0000428">
    <property type="term" value="C:DNA-directed RNA polymerase complex"/>
    <property type="evidence" value="ECO:0007669"/>
    <property type="project" value="UniProtKB-KW"/>
</dbReference>
<dbReference type="GO" id="GO:0003677">
    <property type="term" value="F:DNA binding"/>
    <property type="evidence" value="ECO:0007669"/>
    <property type="project" value="UniProtKB-UniRule"/>
</dbReference>
<dbReference type="GO" id="GO:0003899">
    <property type="term" value="F:DNA-directed RNA polymerase activity"/>
    <property type="evidence" value="ECO:0007669"/>
    <property type="project" value="UniProtKB-UniRule"/>
</dbReference>
<dbReference type="GO" id="GO:0000287">
    <property type="term" value="F:magnesium ion binding"/>
    <property type="evidence" value="ECO:0007669"/>
    <property type="project" value="UniProtKB-UniRule"/>
</dbReference>
<dbReference type="GO" id="GO:0008270">
    <property type="term" value="F:zinc ion binding"/>
    <property type="evidence" value="ECO:0007669"/>
    <property type="project" value="UniProtKB-UniRule"/>
</dbReference>
<dbReference type="GO" id="GO:0006351">
    <property type="term" value="P:DNA-templated transcription"/>
    <property type="evidence" value="ECO:0007669"/>
    <property type="project" value="UniProtKB-UniRule"/>
</dbReference>
<dbReference type="CDD" id="cd02655">
    <property type="entry name" value="RNAP_beta'_C"/>
    <property type="match status" value="1"/>
</dbReference>
<dbReference type="CDD" id="cd01609">
    <property type="entry name" value="RNAP_beta'_N"/>
    <property type="match status" value="1"/>
</dbReference>
<dbReference type="FunFam" id="1.10.132.30:FF:000003">
    <property type="entry name" value="DNA-directed RNA polymerase subunit beta"/>
    <property type="match status" value="1"/>
</dbReference>
<dbReference type="Gene3D" id="1.10.132.30">
    <property type="match status" value="1"/>
</dbReference>
<dbReference type="Gene3D" id="1.10.150.390">
    <property type="match status" value="1"/>
</dbReference>
<dbReference type="Gene3D" id="1.10.1790.20">
    <property type="match status" value="1"/>
</dbReference>
<dbReference type="Gene3D" id="1.10.40.90">
    <property type="match status" value="1"/>
</dbReference>
<dbReference type="Gene3D" id="2.40.40.20">
    <property type="match status" value="1"/>
</dbReference>
<dbReference type="Gene3D" id="2.40.50.100">
    <property type="match status" value="2"/>
</dbReference>
<dbReference type="Gene3D" id="4.10.860.120">
    <property type="entry name" value="RNA polymerase II, clamp domain"/>
    <property type="match status" value="1"/>
</dbReference>
<dbReference type="Gene3D" id="1.10.274.100">
    <property type="entry name" value="RNA polymerase Rpb1, domain 3"/>
    <property type="match status" value="2"/>
</dbReference>
<dbReference type="HAMAP" id="MF_01322">
    <property type="entry name" value="RNApol_bact_RpoC"/>
    <property type="match status" value="1"/>
</dbReference>
<dbReference type="InterPro" id="IPR045867">
    <property type="entry name" value="DNA-dir_RpoC_beta_prime"/>
</dbReference>
<dbReference type="InterPro" id="IPR012754">
    <property type="entry name" value="DNA-dir_RpoC_beta_prime_bact"/>
</dbReference>
<dbReference type="InterPro" id="IPR000722">
    <property type="entry name" value="RNA_pol_asu"/>
</dbReference>
<dbReference type="InterPro" id="IPR006592">
    <property type="entry name" value="RNA_pol_N"/>
</dbReference>
<dbReference type="InterPro" id="IPR007080">
    <property type="entry name" value="RNA_pol_Rpb1_1"/>
</dbReference>
<dbReference type="InterPro" id="IPR007066">
    <property type="entry name" value="RNA_pol_Rpb1_3"/>
</dbReference>
<dbReference type="InterPro" id="IPR042102">
    <property type="entry name" value="RNA_pol_Rpb1_3_sf"/>
</dbReference>
<dbReference type="InterPro" id="IPR007083">
    <property type="entry name" value="RNA_pol_Rpb1_4"/>
</dbReference>
<dbReference type="InterPro" id="IPR007081">
    <property type="entry name" value="RNA_pol_Rpb1_5"/>
</dbReference>
<dbReference type="InterPro" id="IPR044893">
    <property type="entry name" value="RNA_pol_Rpb1_clamp_domain"/>
</dbReference>
<dbReference type="InterPro" id="IPR038120">
    <property type="entry name" value="Rpb1_funnel_sf"/>
</dbReference>
<dbReference type="NCBIfam" id="TIGR02386">
    <property type="entry name" value="rpoC_TIGR"/>
    <property type="match status" value="1"/>
</dbReference>
<dbReference type="PANTHER" id="PTHR19376">
    <property type="entry name" value="DNA-DIRECTED RNA POLYMERASE"/>
    <property type="match status" value="1"/>
</dbReference>
<dbReference type="PANTHER" id="PTHR19376:SF54">
    <property type="entry name" value="DNA-DIRECTED RNA POLYMERASE SUBUNIT BETA"/>
    <property type="match status" value="1"/>
</dbReference>
<dbReference type="Pfam" id="PF04997">
    <property type="entry name" value="RNA_pol_Rpb1_1"/>
    <property type="match status" value="1"/>
</dbReference>
<dbReference type="Pfam" id="PF00623">
    <property type="entry name" value="RNA_pol_Rpb1_2"/>
    <property type="match status" value="2"/>
</dbReference>
<dbReference type="Pfam" id="PF04983">
    <property type="entry name" value="RNA_pol_Rpb1_3"/>
    <property type="match status" value="1"/>
</dbReference>
<dbReference type="Pfam" id="PF05000">
    <property type="entry name" value="RNA_pol_Rpb1_4"/>
    <property type="match status" value="1"/>
</dbReference>
<dbReference type="Pfam" id="PF04998">
    <property type="entry name" value="RNA_pol_Rpb1_5"/>
    <property type="match status" value="1"/>
</dbReference>
<dbReference type="SMART" id="SM00663">
    <property type="entry name" value="RPOLA_N"/>
    <property type="match status" value="1"/>
</dbReference>
<dbReference type="SUPFAM" id="SSF64484">
    <property type="entry name" value="beta and beta-prime subunits of DNA dependent RNA-polymerase"/>
    <property type="match status" value="1"/>
</dbReference>
<keyword id="KW-0240">DNA-directed RNA polymerase</keyword>
<keyword id="KW-0460">Magnesium</keyword>
<keyword id="KW-0479">Metal-binding</keyword>
<keyword id="KW-0548">Nucleotidyltransferase</keyword>
<keyword id="KW-1185">Reference proteome</keyword>
<keyword id="KW-0804">Transcription</keyword>
<keyword id="KW-0808">Transferase</keyword>
<keyword id="KW-0862">Zinc</keyword>